<sequence length="434" mass="46417">MTHAAIDQALADAYRRFTDANPASQRQFEAQARYMPGANSRSVLFYAPFPLTIARGEGAALWDADGHRYADFIAEYTAGVYGHSAPEIRDAVIEAMQGGINLTGHNLLEGRLARLICERFPQIEQLRFTNSGTEANLMALTAALHFTGRRKIVVFSGGYHGGVLGFGARPSPTTVPFDFLVLPYNDAQTARAQIERHGPEIAVVLVEPMQGASGCIPGQPDFLQALRESATQVGALLVFDEVMTSRLAPHGLANKLGIRSDLTTLGKYIGGGMSFGAFGGRADVMALFDPRTGPLAHSGTFNNNVMTMAAGYAGLTKLFTPEAAGALAERGEALRARLNALCANEGVAMQFTGIGSLMNAHFVQGDVRSSEDLAAVDGRLRQLLFFHLLNEDIYSSPRGFVVLSLPLTDADIDRYVAAIGSFIGGHGALLPRAN</sequence>
<proteinExistence type="evidence at protein level"/>
<accession>H8WR05</accession>
<dbReference type="EC" id="2.6.1.-"/>
<dbReference type="EMBL" id="HE608883">
    <property type="protein sequence ID" value="CCE46017.1"/>
    <property type="molecule type" value="Genomic_DNA"/>
</dbReference>
<dbReference type="PDB" id="4AO9">
    <property type="method" value="X-ray"/>
    <property type="resolution" value="1.50 A"/>
    <property type="chains" value="A/B=1-434"/>
</dbReference>
<dbReference type="PDB" id="4AOA">
    <property type="method" value="X-ray"/>
    <property type="resolution" value="2.28 A"/>
    <property type="chains" value="A/B=1-434"/>
</dbReference>
<dbReference type="PDBsum" id="4AO9"/>
<dbReference type="PDBsum" id="4AOA"/>
<dbReference type="SMR" id="H8WR05"/>
<dbReference type="BRENDA" id="2.6.1.5">
    <property type="organism ID" value="234"/>
</dbReference>
<dbReference type="EvolutionaryTrace" id="H8WR05"/>
<dbReference type="GO" id="GO:0030170">
    <property type="term" value="F:pyridoxal phosphate binding"/>
    <property type="evidence" value="ECO:0007669"/>
    <property type="project" value="InterPro"/>
</dbReference>
<dbReference type="GO" id="GO:0008483">
    <property type="term" value="F:transaminase activity"/>
    <property type="evidence" value="ECO:0007669"/>
    <property type="project" value="UniProtKB-KW"/>
</dbReference>
<dbReference type="Gene3D" id="3.90.1150.10">
    <property type="entry name" value="Aspartate Aminotransferase, domain 1"/>
    <property type="match status" value="1"/>
</dbReference>
<dbReference type="Gene3D" id="3.40.640.10">
    <property type="entry name" value="Type I PLP-dependent aspartate aminotransferase-like (Major domain)"/>
    <property type="match status" value="1"/>
</dbReference>
<dbReference type="InterPro" id="IPR005814">
    <property type="entry name" value="Aminotrans_3"/>
</dbReference>
<dbReference type="InterPro" id="IPR015424">
    <property type="entry name" value="PyrdxlP-dep_Trfase"/>
</dbReference>
<dbReference type="InterPro" id="IPR015421">
    <property type="entry name" value="PyrdxlP-dep_Trfase_major"/>
</dbReference>
<dbReference type="InterPro" id="IPR015422">
    <property type="entry name" value="PyrdxlP-dep_Trfase_small"/>
</dbReference>
<dbReference type="PANTHER" id="PTHR43713">
    <property type="entry name" value="GLUTAMATE-1-SEMIALDEHYDE 2,1-AMINOMUTASE"/>
    <property type="match status" value="1"/>
</dbReference>
<dbReference type="PANTHER" id="PTHR43713:SF3">
    <property type="entry name" value="GLUTAMATE-1-SEMIALDEHYDE 2,1-AMINOMUTASE 1, CHLOROPLASTIC-RELATED"/>
    <property type="match status" value="1"/>
</dbReference>
<dbReference type="Pfam" id="PF00202">
    <property type="entry name" value="Aminotran_3"/>
    <property type="match status" value="1"/>
</dbReference>
<dbReference type="SUPFAM" id="SSF53383">
    <property type="entry name" value="PLP-dependent transferases"/>
    <property type="match status" value="1"/>
</dbReference>
<name>BFAT_VARPD</name>
<evidence type="ECO:0000269" key="1">
    <source>
    </source>
</evidence>
<evidence type="ECO:0000305" key="2"/>
<evidence type="ECO:0007829" key="3">
    <source>
        <dbReference type="PDB" id="4AO9"/>
    </source>
</evidence>
<evidence type="ECO:0007829" key="4">
    <source>
        <dbReference type="PDB" id="4AOA"/>
    </source>
</evidence>
<organism>
    <name type="scientific">Variovorax paradoxus</name>
    <dbReference type="NCBI Taxonomy" id="34073"/>
    <lineage>
        <taxon>Bacteria</taxon>
        <taxon>Pseudomonadati</taxon>
        <taxon>Pseudomonadota</taxon>
        <taxon>Betaproteobacteria</taxon>
        <taxon>Burkholderiales</taxon>
        <taxon>Comamonadaceae</taxon>
        <taxon>Variovorax</taxon>
    </lineage>
</organism>
<feature type="chain" id="PRO_0000421443" description="Beta-phenylalanine transaminase">
    <location>
        <begin position="1"/>
        <end position="434"/>
    </location>
</feature>
<feature type="binding site" evidence="2">
    <location>
        <position position="41"/>
    </location>
    <ligand>
        <name>(S)-3-amino-3-phenylpropanoate</name>
        <dbReference type="ChEBI" id="CHEBI:68506"/>
    </ligand>
</feature>
<feature type="binding site">
    <location>
        <begin position="132"/>
        <end position="133"/>
    </location>
    <ligand>
        <name>pyridoxal 5'-phosphate</name>
        <dbReference type="ChEBI" id="CHEBI:597326"/>
    </ligand>
</feature>
<feature type="binding site">
    <location>
        <position position="300"/>
    </location>
    <ligand>
        <name>pyridoxal 5'-phosphate</name>
        <dbReference type="ChEBI" id="CHEBI:597326"/>
    </ligand>
</feature>
<feature type="modified residue" description="N6-(pyridoxal phosphate)lysine">
    <location>
        <position position="267"/>
    </location>
</feature>
<feature type="mutagenesis site" description="Loss of catalytic activity." evidence="1">
    <original>R</original>
    <variation>A</variation>
    <location>
        <position position="41"/>
    </location>
</feature>
<feature type="helix" evidence="3">
    <location>
        <begin position="3"/>
        <end position="20"/>
    </location>
</feature>
<feature type="helix" evidence="3">
    <location>
        <begin position="22"/>
        <end position="31"/>
    </location>
</feature>
<feature type="turn" evidence="3">
    <location>
        <begin position="32"/>
        <end position="34"/>
    </location>
</feature>
<feature type="helix" evidence="3">
    <location>
        <begin position="36"/>
        <end position="38"/>
    </location>
</feature>
<feature type="helix" evidence="3">
    <location>
        <begin position="42"/>
        <end position="44"/>
    </location>
</feature>
<feature type="strand" evidence="3">
    <location>
        <begin position="52"/>
        <end position="57"/>
    </location>
</feature>
<feature type="strand" evidence="3">
    <location>
        <begin position="60"/>
        <end position="63"/>
    </location>
</feature>
<feature type="strand" evidence="3">
    <location>
        <begin position="68"/>
        <end position="73"/>
    </location>
</feature>
<feature type="helix" evidence="3">
    <location>
        <begin position="74"/>
        <end position="77"/>
    </location>
</feature>
<feature type="turn" evidence="3">
    <location>
        <begin position="78"/>
        <end position="81"/>
    </location>
</feature>
<feature type="helix" evidence="3">
    <location>
        <begin position="86"/>
        <end position="97"/>
    </location>
</feature>
<feature type="strand" evidence="3">
    <location>
        <begin position="104"/>
        <end position="108"/>
    </location>
</feature>
<feature type="helix" evidence="3">
    <location>
        <begin position="109"/>
        <end position="119"/>
    </location>
</feature>
<feature type="strand" evidence="3">
    <location>
        <begin position="124"/>
        <end position="131"/>
    </location>
</feature>
<feature type="helix" evidence="3">
    <location>
        <begin position="132"/>
        <end position="147"/>
    </location>
</feature>
<feature type="strand" evidence="3">
    <location>
        <begin position="151"/>
        <end position="155"/>
    </location>
</feature>
<feature type="strand" evidence="3">
    <location>
        <begin position="165"/>
        <end position="170"/>
    </location>
</feature>
<feature type="strand" evidence="3">
    <location>
        <begin position="177"/>
        <end position="182"/>
    </location>
</feature>
<feature type="helix" evidence="3">
    <location>
        <begin position="187"/>
        <end position="196"/>
    </location>
</feature>
<feature type="helix" evidence="3">
    <location>
        <begin position="198"/>
        <end position="200"/>
    </location>
</feature>
<feature type="strand" evidence="3">
    <location>
        <begin position="201"/>
        <end position="206"/>
    </location>
</feature>
<feature type="strand" evidence="3">
    <location>
        <begin position="208"/>
        <end position="211"/>
    </location>
</feature>
<feature type="turn" evidence="3">
    <location>
        <begin position="212"/>
        <end position="214"/>
    </location>
</feature>
<feature type="strand" evidence="4">
    <location>
        <begin position="215"/>
        <end position="217"/>
    </location>
</feature>
<feature type="helix" evidence="3">
    <location>
        <begin position="220"/>
        <end position="233"/>
    </location>
</feature>
<feature type="strand" evidence="3">
    <location>
        <begin position="236"/>
        <end position="240"/>
    </location>
</feature>
<feature type="helix" evidence="3">
    <location>
        <begin position="244"/>
        <end position="247"/>
    </location>
</feature>
<feature type="helix" evidence="3">
    <location>
        <begin position="252"/>
        <end position="256"/>
    </location>
</feature>
<feature type="strand" evidence="3">
    <location>
        <begin position="261"/>
        <end position="266"/>
    </location>
</feature>
<feature type="helix" evidence="3">
    <location>
        <begin position="267"/>
        <end position="270"/>
    </location>
</feature>
<feature type="strand" evidence="3">
    <location>
        <begin position="276"/>
        <end position="280"/>
    </location>
</feature>
<feature type="helix" evidence="3">
    <location>
        <begin position="282"/>
        <end position="285"/>
    </location>
</feature>
<feature type="helix" evidence="3">
    <location>
        <begin position="286"/>
        <end position="288"/>
    </location>
</feature>
<feature type="turn" evidence="3">
    <location>
        <begin position="290"/>
        <end position="292"/>
    </location>
</feature>
<feature type="turn" evidence="3">
    <location>
        <begin position="300"/>
        <end position="303"/>
    </location>
</feature>
<feature type="helix" evidence="3">
    <location>
        <begin position="305"/>
        <end position="317"/>
    </location>
</feature>
<feature type="helix" evidence="3">
    <location>
        <begin position="321"/>
        <end position="345"/>
    </location>
</feature>
<feature type="strand" evidence="3">
    <location>
        <begin position="350"/>
        <end position="354"/>
    </location>
</feature>
<feature type="strand" evidence="3">
    <location>
        <begin position="357"/>
        <end position="362"/>
    </location>
</feature>
<feature type="helix" evidence="3">
    <location>
        <begin position="370"/>
        <end position="373"/>
    </location>
</feature>
<feature type="helix" evidence="3">
    <location>
        <begin position="378"/>
        <end position="390"/>
    </location>
</feature>
<feature type="strand" evidence="3">
    <location>
        <begin position="400"/>
        <end position="402"/>
    </location>
</feature>
<feature type="helix" evidence="3">
    <location>
        <begin position="409"/>
        <end position="425"/>
    </location>
</feature>
<feature type="helix" evidence="3">
    <location>
        <begin position="427"/>
        <end position="429"/>
    </location>
</feature>
<reference key="1">
    <citation type="journal article" date="2013" name="Appl. Environ. Microbiol.">
        <title>Biochemical properties and crystal structure of a beta-phenylalanine aminotransferase from Variovorax paradoxus.</title>
        <authorList>
            <person name="Crismaru C.G."/>
            <person name="Wybenga G.G."/>
            <person name="Szymanski W."/>
            <person name="Wijma H.J."/>
            <person name="Wu B."/>
            <person name="Bartsch S."/>
            <person name="de Wildeman S."/>
            <person name="Poelarends G.J."/>
            <person name="Feringa B.L."/>
            <person name="Dijkstra B.W."/>
            <person name="Janssen D.B."/>
        </authorList>
    </citation>
    <scope>NUCLEOTIDE SEQUENCE [GENOMIC DNA]</scope>
    <scope>X-RAY CRYSTALLOGRAPHY (1.50 ANGSTROMS) IN COMPLEXES WITH PLP AND THE INHIBITOR 2-AMINOOXYACETATE</scope>
    <scope>FUNCTION</scope>
    <scope>CATALYTIC ACTIVITY</scope>
    <scope>SUBSTRATE SPECIFICITY</scope>
    <scope>ENANTIOSELECTIVITY</scope>
    <scope>COFACTOR</scope>
    <scope>SUBUNIT</scope>
    <scope>ACTIVITY REGULATION</scope>
    <scope>BIOTECHNOLOGY</scope>
    <scope>MUTAGENESIS OF ARG-41</scope>
    <source>
        <strain>CBF3</strain>
    </source>
</reference>
<protein>
    <recommendedName>
        <fullName>Beta-phenylalanine transaminase</fullName>
        <ecNumber>2.6.1.-</ecNumber>
    </recommendedName>
    <alternativeName>
        <fullName>Aromatic beta-amino acid aminotransferase</fullName>
    </alternativeName>
    <alternativeName>
        <fullName>Beta-phenylalanine aminotransferase</fullName>
    </alternativeName>
    <alternativeName>
        <fullName>VpAT</fullName>
    </alternativeName>
</protein>
<keyword id="KW-0002">3D-structure</keyword>
<keyword id="KW-0032">Aminotransferase</keyword>
<keyword id="KW-0663">Pyridoxal phosphate</keyword>
<keyword id="KW-0808">Transferase</keyword>
<comment type="function">
    <text evidence="1">Aminotransferase that acts exclusively on beta-amino acids and exhibits a broad substrate range in vitro, accepting meta-, para- and, to a lesser extent, ortho-substituted beta-phenylalanine derivatives as amino donors, and 2-oxoglutarate or pyruvate as amino acceptors. Is highly enantioselective toward (S)-beta-phenylalanine (is not active with (R)-beta-phenylalanine) and derivatives with different substituents on the phenyl ring, allowing the kinetic resolution of various racemic beta-amino acids to yield (R)-beta-amino acids with &gt;95% enantiomeric excess (ee). Highly prefers aromatic beta-amino acids over aliphatic beta-amino acids; cannot use beta-alanine or beta-glutamate as substrate. Is likely involved in the beta-phenylalanine degradation pathway that allows V.paradoxus strain CBF3 to use beta-phenylalanine as a sole nitrogen source.</text>
</comment>
<comment type="catalytic activity">
    <reaction evidence="1">
        <text>(S)-3-amino-3-phenylpropanoate + 2-oxoglutarate = 3-oxo-3-phenylpropanoate + L-glutamate</text>
        <dbReference type="Rhea" id="RHEA:47320"/>
        <dbReference type="ChEBI" id="CHEBI:16810"/>
        <dbReference type="ChEBI" id="CHEBI:22731"/>
        <dbReference type="ChEBI" id="CHEBI:29985"/>
        <dbReference type="ChEBI" id="CHEBI:68506"/>
    </reaction>
</comment>
<comment type="catalytic activity">
    <reaction evidence="1">
        <text>(S)-3-amino-3-phenylpropanoate + pyruvate = 3-oxo-3-phenylpropanoate + L-alanine</text>
        <dbReference type="Rhea" id="RHEA:47324"/>
        <dbReference type="ChEBI" id="CHEBI:15361"/>
        <dbReference type="ChEBI" id="CHEBI:22731"/>
        <dbReference type="ChEBI" id="CHEBI:57972"/>
        <dbReference type="ChEBI" id="CHEBI:68506"/>
    </reaction>
</comment>
<comment type="cofactor">
    <cofactor evidence="1">
        <name>pyridoxal 5'-phosphate</name>
        <dbReference type="ChEBI" id="CHEBI:597326"/>
    </cofactor>
    <text evidence="1">Binds 1 pyridoxal phosphate per subunit.</text>
</comment>
<comment type="activity regulation">
    <text evidence="1">Is inhibited by 2-aminooxyacetate (AOA), a mimic of beta-alanine and a known inhibitor of aminotransferases.</text>
</comment>
<comment type="biophysicochemical properties">
    <kinetics>
        <KM>1.5 mM for (S)-beta-phenylalanine</KM>
        <KM>0.3 mM for 2-oxoglutarate</KM>
        <text>kcat is around 11 sec(-1) with (S)-beta-phenylalanine and 2-oxoglutarate as substrates.</text>
    </kinetics>
    <phDependence>
        <text>Has high activity over a broad pH range (4 to 11.2).</text>
    </phDependence>
    <temperatureDependence>
        <text>Optimum temperature is 55 degrees Celsius. Displays a 2-fold higher activity at 55 degrees Celsius than at 30 degrees Celsius.</text>
    </temperatureDependence>
</comment>
<comment type="subunit">
    <text evidence="1">Homodimer.</text>
</comment>
<comment type="biotechnology">
    <text evidence="1">Is an attractive template for future beta-aminotransferase-engineering efforts toward the synthesis of enantiomerically pure beta-amino acids.</text>
</comment>
<comment type="similarity">
    <text evidence="2">Belongs to the class-III pyridoxal-phosphate-dependent aminotransferase family.</text>
</comment>